<gene>
    <name evidence="4" type="primary">OFUT1</name>
    <name evidence="5" type="ordered locus">At1g04910</name>
    <name evidence="6" type="ORF">F13M7.10</name>
</gene>
<keyword id="KW-0119">Carbohydrate metabolism</keyword>
<keyword id="KW-0294">Fucose metabolism</keyword>
<keyword id="KW-0325">Glycoprotein</keyword>
<keyword id="KW-0328">Glycosyltransferase</keyword>
<keyword id="KW-0333">Golgi apparatus</keyword>
<keyword id="KW-0472">Membrane</keyword>
<keyword id="KW-1185">Reference proteome</keyword>
<keyword id="KW-0735">Signal-anchor</keyword>
<keyword id="KW-0808">Transferase</keyword>
<keyword id="KW-0812">Transmembrane</keyword>
<keyword id="KW-1133">Transmembrane helix</keyword>
<sequence length="519" mass="59043">MRRLGHHRLHGKTGGVGTKGMVAKLSIGVIVLLICTLSLLFSANIGSNREPTRPSKINVEELWESAKSGGWRPSSAPRSDWPPPTKETNGYLRVRCNGGLNQQRSAICNAVLAARIMNATLVLPELDANSFWHDDSGFQGIYDVEHFIETLKYDVKIVGKIPDVHKNGKTKKIKAFQIRPPRDAPIEWYLTTALKAMREHSAIYLTPFSHRLAEEIDNPEYQRLRCRVNYHALRFKPHIMKLSESIVDKLRSQGHFMSIHLRFEMDMLAFAGCFDIFNPEEQKILRKYRKENFADKRLIYNERRAIGKCPLTPEEVGLILRAMRFDNSTRIYLAAGELFGGEQFMKPFRTLFPRLDNHSSVDPSEELSATSQGLIGSAVDYMVCLLSDIFMPTYDGPSNFANNLLGHRLYYGFRTTIRPDRKALAPIFIAREKGKRAGFEEAVRRVMLKTNFGGPHKRVSPESFYTNSWPECFCQMNPKKSSDKCPPNNVIEILDSRLESIRDPDSTSQTNSTVTGLER</sequence>
<proteinExistence type="evidence at transcript level"/>
<organism>
    <name type="scientific">Arabidopsis thaliana</name>
    <name type="common">Mouse-ear cress</name>
    <dbReference type="NCBI Taxonomy" id="3702"/>
    <lineage>
        <taxon>Eukaryota</taxon>
        <taxon>Viridiplantae</taxon>
        <taxon>Streptophyta</taxon>
        <taxon>Embryophyta</taxon>
        <taxon>Tracheophyta</taxon>
        <taxon>Spermatophyta</taxon>
        <taxon>Magnoliopsida</taxon>
        <taxon>eudicotyledons</taxon>
        <taxon>Gunneridae</taxon>
        <taxon>Pentapetalae</taxon>
        <taxon>rosids</taxon>
        <taxon>malvids</taxon>
        <taxon>Brassicales</taxon>
        <taxon>Brassicaceae</taxon>
        <taxon>Camelineae</taxon>
        <taxon>Arabidopsis</taxon>
    </lineage>
</organism>
<comment type="pathway">
    <text evidence="4">Glycan metabolism.</text>
</comment>
<comment type="subcellular location">
    <subcellularLocation>
        <location evidence="4">Golgi apparatus membrane</location>
        <topology evidence="4">Single-pass type II membrane protein</topology>
    </subcellularLocation>
</comment>
<comment type="similarity">
    <text evidence="4">Belongs to the glycosyltransferase GT106 family.</text>
</comment>
<comment type="sequence caution" evidence="4">
    <conflict type="erroneous gene model prediction">
        <sequence resource="EMBL-CDS" id="AAF40446"/>
    </conflict>
</comment>
<comment type="sequence caution" evidence="4">
    <conflict type="erroneous initiation">
        <sequence resource="EMBL-CDS" id="BAD94749"/>
    </conflict>
    <text>Truncated N-terminus.</text>
</comment>
<name>OFUT1_ARATH</name>
<feature type="chain" id="PRO_0000300106" description="O-fucosyltransferase 1">
    <location>
        <begin position="1"/>
        <end position="519"/>
    </location>
</feature>
<feature type="topological domain" description="Cytoplasmic" evidence="4">
    <location>
        <begin position="1"/>
        <end position="24"/>
    </location>
</feature>
<feature type="transmembrane region" description="Helical; Signal-anchor for type II membrane protein" evidence="4">
    <location>
        <begin position="25"/>
        <end position="45"/>
    </location>
</feature>
<feature type="topological domain" description="Lumenal" evidence="4">
    <location>
        <begin position="46"/>
        <end position="519"/>
    </location>
</feature>
<feature type="region of interest" description="Disordered" evidence="3">
    <location>
        <begin position="67"/>
        <end position="86"/>
    </location>
</feature>
<feature type="region of interest" description="Disordered" evidence="3">
    <location>
        <begin position="497"/>
        <end position="519"/>
    </location>
</feature>
<feature type="compositionally biased region" description="Polar residues" evidence="3">
    <location>
        <begin position="506"/>
        <end position="519"/>
    </location>
</feature>
<feature type="binding site" evidence="1">
    <location>
        <begin position="260"/>
        <end position="262"/>
    </location>
    <ligand>
        <name>substrate</name>
    </ligand>
</feature>
<feature type="glycosylation site" description="N-linked (GlcNAc...) asparagine" evidence="2">
    <location>
        <position position="118"/>
    </location>
</feature>
<feature type="glycosylation site" description="N-linked (GlcNAc...) asparagine" evidence="2">
    <location>
        <position position="327"/>
    </location>
</feature>
<feature type="glycosylation site" description="N-linked (GlcNAc...) asparagine" evidence="2">
    <location>
        <position position="357"/>
    </location>
</feature>
<feature type="glycosylation site" description="N-linked (GlcNAc...) asparagine" evidence="2">
    <location>
        <position position="511"/>
    </location>
</feature>
<accession>Q8W486</accession>
<accession>A0A1W6AK13</accession>
<accession>Q56ZD6</accession>
<accession>Q9MAT9</accession>
<reference key="1">
    <citation type="submission" date="2017-04" db="EMBL/GenBank/DDBJ databases">
        <title>Arabidopsis glycosyltransferases: an update.</title>
        <authorList>
            <person name="Zeng W."/>
            <person name="Gluza P."/>
            <person name="Heazlewood J."/>
        </authorList>
    </citation>
    <scope>NUCLEOTIDE SEQUENCE [MRNA]</scope>
    <source>
        <strain>cv. Columbia</strain>
    </source>
</reference>
<reference key="2">
    <citation type="journal article" date="2000" name="Nature">
        <title>Sequence and analysis of chromosome 1 of the plant Arabidopsis thaliana.</title>
        <authorList>
            <person name="Theologis A."/>
            <person name="Ecker J.R."/>
            <person name="Palm C.J."/>
            <person name="Federspiel N.A."/>
            <person name="Kaul S."/>
            <person name="White O."/>
            <person name="Alonso J."/>
            <person name="Altafi H."/>
            <person name="Araujo R."/>
            <person name="Bowman C.L."/>
            <person name="Brooks S.Y."/>
            <person name="Buehler E."/>
            <person name="Chan A."/>
            <person name="Chao Q."/>
            <person name="Chen H."/>
            <person name="Cheuk R.F."/>
            <person name="Chin C.W."/>
            <person name="Chung M.K."/>
            <person name="Conn L."/>
            <person name="Conway A.B."/>
            <person name="Conway A.R."/>
            <person name="Creasy T.H."/>
            <person name="Dewar K."/>
            <person name="Dunn P."/>
            <person name="Etgu P."/>
            <person name="Feldblyum T.V."/>
            <person name="Feng J.-D."/>
            <person name="Fong B."/>
            <person name="Fujii C.Y."/>
            <person name="Gill J.E."/>
            <person name="Goldsmith A.D."/>
            <person name="Haas B."/>
            <person name="Hansen N.F."/>
            <person name="Hughes B."/>
            <person name="Huizar L."/>
            <person name="Hunter J.L."/>
            <person name="Jenkins J."/>
            <person name="Johnson-Hopson C."/>
            <person name="Khan S."/>
            <person name="Khaykin E."/>
            <person name="Kim C.J."/>
            <person name="Koo H.L."/>
            <person name="Kremenetskaia I."/>
            <person name="Kurtz D.B."/>
            <person name="Kwan A."/>
            <person name="Lam B."/>
            <person name="Langin-Hooper S."/>
            <person name="Lee A."/>
            <person name="Lee J.M."/>
            <person name="Lenz C.A."/>
            <person name="Li J.H."/>
            <person name="Li Y.-P."/>
            <person name="Lin X."/>
            <person name="Liu S.X."/>
            <person name="Liu Z.A."/>
            <person name="Luros J.S."/>
            <person name="Maiti R."/>
            <person name="Marziali A."/>
            <person name="Militscher J."/>
            <person name="Miranda M."/>
            <person name="Nguyen M."/>
            <person name="Nierman W.C."/>
            <person name="Osborne B.I."/>
            <person name="Pai G."/>
            <person name="Peterson J."/>
            <person name="Pham P.K."/>
            <person name="Rizzo M."/>
            <person name="Rooney T."/>
            <person name="Rowley D."/>
            <person name="Sakano H."/>
            <person name="Salzberg S.L."/>
            <person name="Schwartz J.R."/>
            <person name="Shinn P."/>
            <person name="Southwick A.M."/>
            <person name="Sun H."/>
            <person name="Tallon L.J."/>
            <person name="Tambunga G."/>
            <person name="Toriumi M.J."/>
            <person name="Town C.D."/>
            <person name="Utterback T."/>
            <person name="Van Aken S."/>
            <person name="Vaysberg M."/>
            <person name="Vysotskaia V.S."/>
            <person name="Walker M."/>
            <person name="Wu D."/>
            <person name="Yu G."/>
            <person name="Fraser C.M."/>
            <person name="Venter J.C."/>
            <person name="Davis R.W."/>
        </authorList>
    </citation>
    <scope>NUCLEOTIDE SEQUENCE [LARGE SCALE GENOMIC DNA]</scope>
    <source>
        <strain>cv. Columbia</strain>
    </source>
</reference>
<reference key="3">
    <citation type="journal article" date="2017" name="Plant J.">
        <title>Araport11: a complete reannotation of the Arabidopsis thaliana reference genome.</title>
        <authorList>
            <person name="Cheng C.Y."/>
            <person name="Krishnakumar V."/>
            <person name="Chan A.P."/>
            <person name="Thibaud-Nissen F."/>
            <person name="Schobel S."/>
            <person name="Town C.D."/>
        </authorList>
    </citation>
    <scope>GENOME REANNOTATION</scope>
    <source>
        <strain>cv. Columbia</strain>
    </source>
</reference>
<reference key="4">
    <citation type="journal article" date="2003" name="Science">
        <title>Empirical analysis of transcriptional activity in the Arabidopsis genome.</title>
        <authorList>
            <person name="Yamada K."/>
            <person name="Lim J."/>
            <person name="Dale J.M."/>
            <person name="Chen H."/>
            <person name="Shinn P."/>
            <person name="Palm C.J."/>
            <person name="Southwick A.M."/>
            <person name="Wu H.C."/>
            <person name="Kim C.J."/>
            <person name="Nguyen M."/>
            <person name="Pham P.K."/>
            <person name="Cheuk R.F."/>
            <person name="Karlin-Newmann G."/>
            <person name="Liu S.X."/>
            <person name="Lam B."/>
            <person name="Sakano H."/>
            <person name="Wu T."/>
            <person name="Yu G."/>
            <person name="Miranda M."/>
            <person name="Quach H.L."/>
            <person name="Tripp M."/>
            <person name="Chang C.H."/>
            <person name="Lee J.M."/>
            <person name="Toriumi M.J."/>
            <person name="Chan M.M."/>
            <person name="Tang C.C."/>
            <person name="Onodera C.S."/>
            <person name="Deng J.M."/>
            <person name="Akiyama K."/>
            <person name="Ansari Y."/>
            <person name="Arakawa T."/>
            <person name="Banh J."/>
            <person name="Banno F."/>
            <person name="Bowser L."/>
            <person name="Brooks S.Y."/>
            <person name="Carninci P."/>
            <person name="Chao Q."/>
            <person name="Choy N."/>
            <person name="Enju A."/>
            <person name="Goldsmith A.D."/>
            <person name="Gurjal M."/>
            <person name="Hansen N.F."/>
            <person name="Hayashizaki Y."/>
            <person name="Johnson-Hopson C."/>
            <person name="Hsuan V.W."/>
            <person name="Iida K."/>
            <person name="Karnes M."/>
            <person name="Khan S."/>
            <person name="Koesema E."/>
            <person name="Ishida J."/>
            <person name="Jiang P.X."/>
            <person name="Jones T."/>
            <person name="Kawai J."/>
            <person name="Kamiya A."/>
            <person name="Meyers C."/>
            <person name="Nakajima M."/>
            <person name="Narusaka M."/>
            <person name="Seki M."/>
            <person name="Sakurai T."/>
            <person name="Satou M."/>
            <person name="Tamse R."/>
            <person name="Vaysberg M."/>
            <person name="Wallender E.K."/>
            <person name="Wong C."/>
            <person name="Yamamura Y."/>
            <person name="Yuan S."/>
            <person name="Shinozaki K."/>
            <person name="Davis R.W."/>
            <person name="Theologis A."/>
            <person name="Ecker J.R."/>
        </authorList>
    </citation>
    <scope>NUCLEOTIDE SEQUENCE [LARGE SCALE MRNA]</scope>
    <source>
        <strain>cv. Columbia</strain>
    </source>
</reference>
<reference key="5">
    <citation type="submission" date="2005-03" db="EMBL/GenBank/DDBJ databases">
        <title>Large-scale analysis of RIKEN Arabidopsis full-length (RAFL) cDNAs.</title>
        <authorList>
            <person name="Totoki Y."/>
            <person name="Seki M."/>
            <person name="Ishida J."/>
            <person name="Nakajima M."/>
            <person name="Enju A."/>
            <person name="Kamiya A."/>
            <person name="Narusaka M."/>
            <person name="Shin-i T."/>
            <person name="Nakagawa M."/>
            <person name="Sakamoto N."/>
            <person name="Oishi K."/>
            <person name="Kohara Y."/>
            <person name="Kobayashi M."/>
            <person name="Toyoda A."/>
            <person name="Sakaki Y."/>
            <person name="Sakurai T."/>
            <person name="Iida K."/>
            <person name="Akiyama K."/>
            <person name="Satou M."/>
            <person name="Toyoda T."/>
            <person name="Konagaya A."/>
            <person name="Carninci P."/>
            <person name="Kawai J."/>
            <person name="Hayashizaki Y."/>
            <person name="Shinozaki K."/>
        </authorList>
    </citation>
    <scope>NUCLEOTIDE SEQUENCE [LARGE SCALE MRNA] OF 439-519</scope>
    <source>
        <strain>cv. Columbia</strain>
    </source>
</reference>
<reference key="6">
    <citation type="journal article" date="2012" name="Front. Plant Sci.">
        <title>Plant glycosyltransferases beyond CAZy: a perspective on DUF families.</title>
        <authorList>
            <person name="Hansen S.F."/>
            <person name="Harholt J."/>
            <person name="Oikawa A."/>
            <person name="Scheller H.V."/>
        </authorList>
    </citation>
    <scope>GENE FAMILY</scope>
    <scope>REVIEW</scope>
</reference>
<reference key="7">
    <citation type="journal article" date="2012" name="PLoS ONE">
        <title>The FRIABLE1 gene product affects cell adhesion in Arabidopsis.</title>
        <authorList>
            <person name="Neumetzler L."/>
            <person name="Humphrey T."/>
            <person name="Lumba S."/>
            <person name="Snyder S."/>
            <person name="Yeats T.H."/>
            <person name="Usadel B."/>
            <person name="Vasilevski A."/>
            <person name="Patel J."/>
            <person name="Rose J.K."/>
            <person name="Persson S."/>
            <person name="Bonetta D."/>
        </authorList>
    </citation>
    <scope>GENE FAMILY</scope>
</reference>
<reference key="8">
    <citation type="journal article" date="2012" name="PLoS ONE">
        <title>Identification of putative rhamnogalacturonan-II specific glycosyltransferases in Arabidopsis using a combination of bioinformatics approaches.</title>
        <authorList>
            <person name="Voxeur A."/>
            <person name="Andre A."/>
            <person name="Breton C."/>
            <person name="Lerouge P."/>
        </authorList>
    </citation>
    <scope>GENE FAMILY</scope>
</reference>
<reference key="9">
    <citation type="journal article" date="2013" name="Plant J.">
        <title>Identification of an additional protein involved in mannan biosynthesis.</title>
        <authorList>
            <person name="Wang Y."/>
            <person name="Mortimer J.C."/>
            <person name="Davis J."/>
            <person name="Dupree P."/>
            <person name="Keegstra K."/>
        </authorList>
    </citation>
    <scope>GENE FAMILY</scope>
</reference>
<reference key="10">
    <citation type="journal article" date="2014" name="Plant J.">
        <title>The plant glycosyltransferase clone collection for functional genomics.</title>
        <authorList>
            <person name="Lao J."/>
            <person name="Oikawa A."/>
            <person name="Bromley J.R."/>
            <person name="McInerney P."/>
            <person name="Suttangkakul A."/>
            <person name="Smith-Moritz A.M."/>
            <person name="Plahar H."/>
            <person name="Chiu T.-Y."/>
            <person name="Gonzalez Fernandez-Nino S.M.G."/>
            <person name="Ebert B."/>
            <person name="Yang F."/>
            <person name="Christiansen K.M."/>
            <person name="Hansen S.F."/>
            <person name="Stonebloom S."/>
            <person name="Adams P.D."/>
            <person name="Ronald P.C."/>
            <person name="Hillson N.J."/>
            <person name="Hadi M.Z."/>
            <person name="Vega-Sanchez M.E."/>
            <person name="Loque D."/>
            <person name="Scheller H.V."/>
            <person name="Heazlewood J.L."/>
        </authorList>
    </citation>
    <scope>WEB RESOURCE</scope>
</reference>
<evidence type="ECO:0000250" key="1">
    <source>
        <dbReference type="UniProtKB" id="Q9H488"/>
    </source>
</evidence>
<evidence type="ECO:0000255" key="2">
    <source>
        <dbReference type="PROSITE-ProRule" id="PRU00498"/>
    </source>
</evidence>
<evidence type="ECO:0000256" key="3">
    <source>
        <dbReference type="SAM" id="MobiDB-lite"/>
    </source>
</evidence>
<evidence type="ECO:0000305" key="4"/>
<evidence type="ECO:0000312" key="5">
    <source>
        <dbReference type="Araport" id="AT1G04910"/>
    </source>
</evidence>
<evidence type="ECO:0000312" key="6">
    <source>
        <dbReference type="EMBL" id="AAF40446.1"/>
    </source>
</evidence>
<evidence type="ECO:0000312" key="7">
    <source>
        <dbReference type="EMBL" id="ARJ31401.1"/>
    </source>
</evidence>
<protein>
    <recommendedName>
        <fullName evidence="4">O-fucosyltransferase 1</fullName>
        <shortName evidence="4">O-FucT-1</shortName>
        <ecNumber evidence="4">2.4.1.-</ecNumber>
    </recommendedName>
    <alternativeName>
        <fullName evidence="7">O-fucosyltransferase family protein</fullName>
    </alternativeName>
</protein>
<dbReference type="EC" id="2.4.1.-" evidence="4"/>
<dbReference type="EMBL" id="KY906037">
    <property type="protein sequence ID" value="ARJ31401.1"/>
    <property type="molecule type" value="mRNA"/>
</dbReference>
<dbReference type="EMBL" id="AC004809">
    <property type="protein sequence ID" value="AAF40446.1"/>
    <property type="status" value="ALT_SEQ"/>
    <property type="molecule type" value="Genomic_DNA"/>
</dbReference>
<dbReference type="EMBL" id="CP002684">
    <property type="protein sequence ID" value="AEE27758.1"/>
    <property type="molecule type" value="Genomic_DNA"/>
</dbReference>
<dbReference type="EMBL" id="AY062762">
    <property type="protein sequence ID" value="AAL32840.1"/>
    <property type="molecule type" value="mRNA"/>
</dbReference>
<dbReference type="EMBL" id="BT008880">
    <property type="protein sequence ID" value="AAP68319.1"/>
    <property type="molecule type" value="mRNA"/>
</dbReference>
<dbReference type="EMBL" id="AK221030">
    <property type="protein sequence ID" value="BAD94749.1"/>
    <property type="status" value="ALT_INIT"/>
    <property type="molecule type" value="mRNA"/>
</dbReference>
<dbReference type="PIR" id="E86182">
    <property type="entry name" value="E86182"/>
</dbReference>
<dbReference type="RefSeq" id="NP_171983.2">
    <property type="nucleotide sequence ID" value="NM_100369.5"/>
</dbReference>
<dbReference type="FunCoup" id="Q8W486">
    <property type="interactions" value="2155"/>
</dbReference>
<dbReference type="STRING" id="3702.Q8W486"/>
<dbReference type="GlyCosmos" id="Q8W486">
    <property type="glycosylation" value="4 sites, No reported glycans"/>
</dbReference>
<dbReference type="GlyGen" id="Q8W486">
    <property type="glycosylation" value="4 sites"/>
</dbReference>
<dbReference type="PaxDb" id="3702-AT1G04910.1"/>
<dbReference type="ProteomicsDB" id="238935"/>
<dbReference type="EnsemblPlants" id="AT1G04910.1">
    <property type="protein sequence ID" value="AT1G04910.1"/>
    <property type="gene ID" value="AT1G04910"/>
</dbReference>
<dbReference type="GeneID" id="839373"/>
<dbReference type="Gramene" id="AT1G04910.1">
    <property type="protein sequence ID" value="AT1G04910.1"/>
    <property type="gene ID" value="AT1G04910"/>
</dbReference>
<dbReference type="KEGG" id="ath:AT1G04910"/>
<dbReference type="Araport" id="AT1G04910"/>
<dbReference type="TAIR" id="AT1G04910"/>
<dbReference type="eggNOG" id="ENOG502QTEN">
    <property type="taxonomic scope" value="Eukaryota"/>
</dbReference>
<dbReference type="HOGENOM" id="CLU_018420_5_0_1"/>
<dbReference type="InParanoid" id="Q8W486"/>
<dbReference type="OMA" id="ECFCQPN"/>
<dbReference type="PhylomeDB" id="Q8W486"/>
<dbReference type="PRO" id="PR:Q8W486"/>
<dbReference type="Proteomes" id="UP000006548">
    <property type="component" value="Chromosome 1"/>
</dbReference>
<dbReference type="ExpressionAtlas" id="Q8W486">
    <property type="expression patterns" value="baseline and differential"/>
</dbReference>
<dbReference type="GO" id="GO:0005768">
    <property type="term" value="C:endosome"/>
    <property type="evidence" value="ECO:0007005"/>
    <property type="project" value="TAIR"/>
</dbReference>
<dbReference type="GO" id="GO:0005794">
    <property type="term" value="C:Golgi apparatus"/>
    <property type="evidence" value="ECO:0007005"/>
    <property type="project" value="TAIR"/>
</dbReference>
<dbReference type="GO" id="GO:0000139">
    <property type="term" value="C:Golgi membrane"/>
    <property type="evidence" value="ECO:0007669"/>
    <property type="project" value="UniProtKB-SubCell"/>
</dbReference>
<dbReference type="GO" id="GO:0000138">
    <property type="term" value="C:Golgi trans cisterna"/>
    <property type="evidence" value="ECO:0007005"/>
    <property type="project" value="TAIR"/>
</dbReference>
<dbReference type="GO" id="GO:0005802">
    <property type="term" value="C:trans-Golgi network"/>
    <property type="evidence" value="ECO:0007005"/>
    <property type="project" value="TAIR"/>
</dbReference>
<dbReference type="GO" id="GO:0016757">
    <property type="term" value="F:glycosyltransferase activity"/>
    <property type="evidence" value="ECO:0007669"/>
    <property type="project" value="UniProtKB-KW"/>
</dbReference>
<dbReference type="GO" id="GO:0006004">
    <property type="term" value="P:fucose metabolic process"/>
    <property type="evidence" value="ECO:0007669"/>
    <property type="project" value="UniProtKB-KW"/>
</dbReference>
<dbReference type="CDD" id="cd11299">
    <property type="entry name" value="O-FucT_plant"/>
    <property type="match status" value="1"/>
</dbReference>
<dbReference type="InterPro" id="IPR024709">
    <property type="entry name" value="FucosylTrfase_pln"/>
</dbReference>
<dbReference type="InterPro" id="IPR019378">
    <property type="entry name" value="GDP-Fuc_O-FucTrfase"/>
</dbReference>
<dbReference type="PANTHER" id="PTHR31741:SF14">
    <property type="entry name" value="O-FUCOSYLTRANSFERASE 1"/>
    <property type="match status" value="1"/>
</dbReference>
<dbReference type="PANTHER" id="PTHR31741">
    <property type="entry name" value="OS02G0726500 PROTEIN-RELATED"/>
    <property type="match status" value="1"/>
</dbReference>
<dbReference type="Pfam" id="PF10250">
    <property type="entry name" value="O-FucT"/>
    <property type="match status" value="1"/>
</dbReference>
<dbReference type="PIRSF" id="PIRSF009360">
    <property type="entry name" value="UCP009360"/>
    <property type="match status" value="1"/>
</dbReference>